<protein>
    <recommendedName>
        <fullName evidence="5">L-type lectin-domain containing receptor kinase V.7</fullName>
        <shortName evidence="5">Arabidopsis thaliana lectin-receptor kinase a3</shortName>
        <shortName evidence="6">AthlecRK-a3</shortName>
        <shortName evidence="5">LecRK-V.7</shortName>
        <ecNumber evidence="3">2.7.11.1</ecNumber>
    </recommendedName>
</protein>
<evidence type="ECO:0000250" key="1">
    <source>
        <dbReference type="UniProtKB" id="Q9LSR8"/>
    </source>
</evidence>
<evidence type="ECO:0000255" key="2"/>
<evidence type="ECO:0000255" key="3">
    <source>
        <dbReference type="PROSITE-ProRule" id="PRU00159"/>
    </source>
</evidence>
<evidence type="ECO:0000269" key="4">
    <source>
    </source>
</evidence>
<evidence type="ECO:0000303" key="5">
    <source>
    </source>
</evidence>
<evidence type="ECO:0000303" key="6">
    <source ref="4"/>
</evidence>
<evidence type="ECO:0000305" key="7"/>
<evidence type="ECO:0000312" key="8">
    <source>
        <dbReference type="Araport" id="AT3G59740"/>
    </source>
</evidence>
<evidence type="ECO:0000312" key="9">
    <source>
        <dbReference type="EMBL" id="CAB75471.1"/>
    </source>
</evidence>
<evidence type="ECO:0000312" key="10">
    <source>
        <dbReference type="EMBL" id="CAB75793.1"/>
    </source>
</evidence>
<proteinExistence type="evidence at transcript level"/>
<organism>
    <name type="scientific">Arabidopsis thaliana</name>
    <name type="common">Mouse-ear cress</name>
    <dbReference type="NCBI Taxonomy" id="3702"/>
    <lineage>
        <taxon>Eukaryota</taxon>
        <taxon>Viridiplantae</taxon>
        <taxon>Streptophyta</taxon>
        <taxon>Embryophyta</taxon>
        <taxon>Tracheophyta</taxon>
        <taxon>Spermatophyta</taxon>
        <taxon>Magnoliopsida</taxon>
        <taxon>eudicotyledons</taxon>
        <taxon>Gunneridae</taxon>
        <taxon>Pentapetalae</taxon>
        <taxon>rosids</taxon>
        <taxon>malvids</taxon>
        <taxon>Brassicales</taxon>
        <taxon>Brassicaceae</taxon>
        <taxon>Camelineae</taxon>
        <taxon>Arabidopsis</taxon>
    </lineage>
</organism>
<keyword id="KW-0067">ATP-binding</keyword>
<keyword id="KW-1003">Cell membrane</keyword>
<keyword id="KW-0325">Glycoprotein</keyword>
<keyword id="KW-0418">Kinase</keyword>
<keyword id="KW-0430">Lectin</keyword>
<keyword id="KW-0472">Membrane</keyword>
<keyword id="KW-0547">Nucleotide-binding</keyword>
<keyword id="KW-0611">Plant defense</keyword>
<keyword id="KW-0675">Receptor</keyword>
<keyword id="KW-1185">Reference proteome</keyword>
<keyword id="KW-0723">Serine/threonine-protein kinase</keyword>
<keyword id="KW-0732">Signal</keyword>
<keyword id="KW-0808">Transferase</keyword>
<keyword id="KW-0812">Transmembrane</keyword>
<keyword id="KW-1133">Transmembrane helix</keyword>
<accession>Q9ZR79</accession>
<accession>Q9M196</accession>
<accession>Q9M200</accession>
<dbReference type="EC" id="2.7.11.1" evidence="3"/>
<dbReference type="EMBL" id="U93161">
    <property type="protein sequence ID" value="AAD00733.1"/>
    <property type="molecule type" value="Genomic_DNA"/>
</dbReference>
<dbReference type="EMBL" id="AL138647">
    <property type="protein sequence ID" value="CAB75793.1"/>
    <property type="status" value="ALT_INIT"/>
    <property type="molecule type" value="Genomic_DNA"/>
</dbReference>
<dbReference type="EMBL" id="AL138659">
    <property type="protein sequence ID" value="CAB75471.1"/>
    <property type="status" value="ALT_SEQ"/>
    <property type="molecule type" value="Genomic_DNA"/>
</dbReference>
<dbReference type="EMBL" id="CP002686">
    <property type="protein sequence ID" value="AEE79960.1"/>
    <property type="molecule type" value="Genomic_DNA"/>
</dbReference>
<dbReference type="PIR" id="T47798">
    <property type="entry name" value="T47798"/>
</dbReference>
<dbReference type="PIR" id="T49315">
    <property type="entry name" value="T49315"/>
</dbReference>
<dbReference type="RefSeq" id="NP_191533.1">
    <property type="nucleotide sequence ID" value="NM_115836.2"/>
</dbReference>
<dbReference type="SMR" id="Q9ZR79"/>
<dbReference type="BioGRID" id="10457">
    <property type="interactions" value="26"/>
</dbReference>
<dbReference type="FunCoup" id="Q9ZR79">
    <property type="interactions" value="7"/>
</dbReference>
<dbReference type="IntAct" id="Q9ZR79">
    <property type="interactions" value="26"/>
</dbReference>
<dbReference type="STRING" id="3702.Q9ZR79"/>
<dbReference type="GlyCosmos" id="Q9ZR79">
    <property type="glycosylation" value="4 sites, No reported glycans"/>
</dbReference>
<dbReference type="GlyGen" id="Q9ZR79">
    <property type="glycosylation" value="4 sites"/>
</dbReference>
<dbReference type="PaxDb" id="3702-AT3G59740.1"/>
<dbReference type="EnsemblPlants" id="AT3G59740.1">
    <property type="protein sequence ID" value="AT3G59740.1"/>
    <property type="gene ID" value="AT3G59740"/>
</dbReference>
<dbReference type="GeneID" id="825143"/>
<dbReference type="Gramene" id="AT3G59740.1">
    <property type="protein sequence ID" value="AT3G59740.1"/>
    <property type="gene ID" value="AT3G59740"/>
</dbReference>
<dbReference type="KEGG" id="ath:AT3G59740"/>
<dbReference type="Araport" id="AT3G59740"/>
<dbReference type="TAIR" id="AT3G59740">
    <property type="gene designation" value="LECRK-V.7"/>
</dbReference>
<dbReference type="eggNOG" id="ENOG502QR0Z">
    <property type="taxonomic scope" value="Eukaryota"/>
</dbReference>
<dbReference type="HOGENOM" id="CLU_000288_62_3_1"/>
<dbReference type="InParanoid" id="Q9ZR79"/>
<dbReference type="OMA" id="EWVQVIV"/>
<dbReference type="PhylomeDB" id="Q9ZR79"/>
<dbReference type="PRO" id="PR:Q9ZR79"/>
<dbReference type="Proteomes" id="UP000006548">
    <property type="component" value="Chromosome 3"/>
</dbReference>
<dbReference type="ExpressionAtlas" id="Q9ZR79">
    <property type="expression patterns" value="baseline and differential"/>
</dbReference>
<dbReference type="GO" id="GO:0005886">
    <property type="term" value="C:plasma membrane"/>
    <property type="evidence" value="ECO:0000250"/>
    <property type="project" value="UniProtKB"/>
</dbReference>
<dbReference type="GO" id="GO:0005524">
    <property type="term" value="F:ATP binding"/>
    <property type="evidence" value="ECO:0007669"/>
    <property type="project" value="UniProtKB-KW"/>
</dbReference>
<dbReference type="GO" id="GO:0030246">
    <property type="term" value="F:carbohydrate binding"/>
    <property type="evidence" value="ECO:0007669"/>
    <property type="project" value="UniProtKB-KW"/>
</dbReference>
<dbReference type="GO" id="GO:0106310">
    <property type="term" value="F:protein serine kinase activity"/>
    <property type="evidence" value="ECO:0007669"/>
    <property type="project" value="RHEA"/>
</dbReference>
<dbReference type="GO" id="GO:0004674">
    <property type="term" value="F:protein serine/threonine kinase activity"/>
    <property type="evidence" value="ECO:0007669"/>
    <property type="project" value="UniProtKB-KW"/>
</dbReference>
<dbReference type="GO" id="GO:0042742">
    <property type="term" value="P:defense response to bacterium"/>
    <property type="evidence" value="ECO:0000315"/>
    <property type="project" value="UniProtKB"/>
</dbReference>
<dbReference type="GO" id="GO:0002229">
    <property type="term" value="P:defense response to oomycetes"/>
    <property type="evidence" value="ECO:0000315"/>
    <property type="project" value="UniProtKB"/>
</dbReference>
<dbReference type="CDD" id="cd06899">
    <property type="entry name" value="lectin_legume_LecRK_Arcelin_ConA"/>
    <property type="match status" value="1"/>
</dbReference>
<dbReference type="CDD" id="cd14066">
    <property type="entry name" value="STKc_IRAK"/>
    <property type="match status" value="1"/>
</dbReference>
<dbReference type="FunFam" id="1.10.510.10:FF:000108">
    <property type="entry name" value="L-type lectin-domain containing receptor kinase S.4"/>
    <property type="match status" value="1"/>
</dbReference>
<dbReference type="FunFam" id="3.30.200.20:FF:000112">
    <property type="entry name" value="Lectin-domain containing receptor kinase A4.3"/>
    <property type="match status" value="1"/>
</dbReference>
<dbReference type="Gene3D" id="2.60.120.200">
    <property type="match status" value="1"/>
</dbReference>
<dbReference type="Gene3D" id="3.30.200.20">
    <property type="entry name" value="Phosphorylase Kinase, domain 1"/>
    <property type="match status" value="1"/>
</dbReference>
<dbReference type="Gene3D" id="1.10.510.10">
    <property type="entry name" value="Transferase(Phosphotransferase) domain 1"/>
    <property type="match status" value="1"/>
</dbReference>
<dbReference type="InterPro" id="IPR013320">
    <property type="entry name" value="ConA-like_dom_sf"/>
</dbReference>
<dbReference type="InterPro" id="IPR011009">
    <property type="entry name" value="Kinase-like_dom_sf"/>
</dbReference>
<dbReference type="InterPro" id="IPR050528">
    <property type="entry name" value="L-type_Lectin-RKs"/>
</dbReference>
<dbReference type="InterPro" id="IPR001220">
    <property type="entry name" value="Legume_lectin_dom"/>
</dbReference>
<dbReference type="InterPro" id="IPR000719">
    <property type="entry name" value="Prot_kinase_dom"/>
</dbReference>
<dbReference type="InterPro" id="IPR017441">
    <property type="entry name" value="Protein_kinase_ATP_BS"/>
</dbReference>
<dbReference type="InterPro" id="IPR008271">
    <property type="entry name" value="Ser/Thr_kinase_AS"/>
</dbReference>
<dbReference type="PANTHER" id="PTHR27007">
    <property type="match status" value="1"/>
</dbReference>
<dbReference type="Pfam" id="PF00139">
    <property type="entry name" value="Lectin_legB"/>
    <property type="match status" value="1"/>
</dbReference>
<dbReference type="Pfam" id="PF00069">
    <property type="entry name" value="Pkinase"/>
    <property type="match status" value="1"/>
</dbReference>
<dbReference type="SMART" id="SM00220">
    <property type="entry name" value="S_TKc"/>
    <property type="match status" value="1"/>
</dbReference>
<dbReference type="SUPFAM" id="SSF49899">
    <property type="entry name" value="Concanavalin A-like lectins/glucanases"/>
    <property type="match status" value="1"/>
</dbReference>
<dbReference type="SUPFAM" id="SSF56112">
    <property type="entry name" value="Protein kinase-like (PK-like)"/>
    <property type="match status" value="1"/>
</dbReference>
<dbReference type="PROSITE" id="PS00107">
    <property type="entry name" value="PROTEIN_KINASE_ATP"/>
    <property type="match status" value="1"/>
</dbReference>
<dbReference type="PROSITE" id="PS50011">
    <property type="entry name" value="PROTEIN_KINASE_DOM"/>
    <property type="match status" value="1"/>
</dbReference>
<dbReference type="PROSITE" id="PS00108">
    <property type="entry name" value="PROTEIN_KINASE_ST"/>
    <property type="match status" value="1"/>
</dbReference>
<sequence>MSHKVLQIVLVLLLTLFSSTHNSNGNFLMEEAAAAGLNGYCLLTNTTKHSYGQAFNNTPVPIKNSSFSFNIIFGIVPEHKQQGSHGMAFVFSPTRGLPGASPDQYLGIFNETNNGKASNNVIAIELDIRKDEEFGDIDDNHVGININGLTSVASASAGYYDDEDGNFKKLSLISTKVMRLSIVYSHTDKQLNVTLLPAEISVPPQKSLLSLNRDLSPYFLEETYLGFTASTGSIGALYYVMQFSYEEGVIYPAWDLGVIPTLPPYPKKSYDRTRRILAVCLTLAVFTALVASGIGFVFYVRHKKVKEVLEEWEIQNGPHRFSYKELFNATKGFKEKQLLGKGGFGQVYKGMLPGSDAEIAVKRTSHDSRQGMSEFLAEISTIGRLRHPNLVRLLGYCKHKENLYLVYDFMPNGSLDRCLTRSNTNENQERLTWEQRFKIIKDVATALLHLHQEWVQVIVHRDIKPANVLLDHGMNARLGDFGLAKLYDQGFDPQTSRVAGTLGYIAPELLRTGRATTSTDVYAFGLVMLEVVCGRRLIERRAAENEAVLVDWILELWESGKLFDAAEESIRQEQNRGEIELVLKLGLLCAHHTELIRPNMSAVLQILNGVSHLPNNLLDVVRAERLRGIPETSMEVLLGLDLNSFGTMTLTNSFVSHGR</sequence>
<feature type="signal peptide" evidence="2">
    <location>
        <begin position="1"/>
        <end position="25"/>
    </location>
</feature>
<feature type="chain" id="PRO_0000403095" description="L-type lectin-domain containing receptor kinase V.7">
    <location>
        <begin position="26"/>
        <end position="659"/>
    </location>
</feature>
<feature type="topological domain" description="Extracellular" evidence="2">
    <location>
        <begin position="26"/>
        <end position="275"/>
    </location>
</feature>
<feature type="transmembrane region" description="Helical" evidence="2">
    <location>
        <begin position="276"/>
        <end position="296"/>
    </location>
</feature>
<feature type="topological domain" description="Cytoplasmic" evidence="2">
    <location>
        <begin position="297"/>
        <end position="659"/>
    </location>
</feature>
<feature type="domain" description="Protein kinase" evidence="3">
    <location>
        <begin position="333"/>
        <end position="595"/>
    </location>
</feature>
<feature type="region of interest" description="Legume-lectin like" evidence="2">
    <location>
        <begin position="22"/>
        <end position="244"/>
    </location>
</feature>
<feature type="active site" description="Proton acceptor" evidence="3">
    <location>
        <position position="462"/>
    </location>
</feature>
<feature type="binding site" evidence="3">
    <location>
        <begin position="339"/>
        <end position="347"/>
    </location>
    <ligand>
        <name>ATP</name>
        <dbReference type="ChEBI" id="CHEBI:30616"/>
    </ligand>
</feature>
<feature type="binding site" evidence="3">
    <location>
        <position position="362"/>
    </location>
    <ligand>
        <name>ATP</name>
        <dbReference type="ChEBI" id="CHEBI:30616"/>
    </ligand>
</feature>
<feature type="glycosylation site" description="N-linked (GlcNAc...) asparagine" evidence="2">
    <location>
        <position position="45"/>
    </location>
</feature>
<feature type="glycosylation site" description="N-linked (GlcNAc...) asparagine" evidence="2">
    <location>
        <position position="64"/>
    </location>
</feature>
<feature type="glycosylation site" description="N-linked (GlcNAc...) asparagine" evidence="2">
    <location>
        <position position="110"/>
    </location>
</feature>
<feature type="glycosylation site" description="N-linked (GlcNAc...) asparagine" evidence="2">
    <location>
        <position position="192"/>
    </location>
</feature>
<feature type="sequence conflict" description="In Ref. 1; AAD00733." evidence="7" ref="1">
    <original>E</original>
    <variation>G</variation>
    <location>
        <position position="568"/>
    </location>
</feature>
<gene>
    <name evidence="5" type="primary">LECRK57</name>
    <name evidence="6" type="synonym">LECRKA3</name>
    <name evidence="8" type="ordered locus">At3g59740</name>
    <name evidence="10" type="ORF">F24G16.10</name>
    <name evidence="9" type="ORF">T16L24.290</name>
</gene>
<reference key="1">
    <citation type="journal article" date="1999" name="Plant Mol. Biol.">
        <title>Characterization of the Arabidopsis lecRK-a genes: members of a superfamily encoding putative receptors with an extracellular domain homologous to legume lectins.</title>
        <authorList>
            <person name="Herve C."/>
            <person name="Serres J."/>
            <person name="Dabos P."/>
            <person name="Canut H."/>
            <person name="Barre A."/>
            <person name="Rouge P."/>
            <person name="Lescure B."/>
        </authorList>
    </citation>
    <scope>NUCLEOTIDE SEQUENCE [GENOMIC DNA]</scope>
    <source>
        <strain>cv. Columbia</strain>
    </source>
</reference>
<reference key="2">
    <citation type="journal article" date="2000" name="Nature">
        <title>Sequence and analysis of chromosome 3 of the plant Arabidopsis thaliana.</title>
        <authorList>
            <person name="Salanoubat M."/>
            <person name="Lemcke K."/>
            <person name="Rieger M."/>
            <person name="Ansorge W."/>
            <person name="Unseld M."/>
            <person name="Fartmann B."/>
            <person name="Valle G."/>
            <person name="Bloecker H."/>
            <person name="Perez-Alonso M."/>
            <person name="Obermaier B."/>
            <person name="Delseny M."/>
            <person name="Boutry M."/>
            <person name="Grivell L.A."/>
            <person name="Mache R."/>
            <person name="Puigdomenech P."/>
            <person name="De Simone V."/>
            <person name="Choisne N."/>
            <person name="Artiguenave F."/>
            <person name="Robert C."/>
            <person name="Brottier P."/>
            <person name="Wincker P."/>
            <person name="Cattolico L."/>
            <person name="Weissenbach J."/>
            <person name="Saurin W."/>
            <person name="Quetier F."/>
            <person name="Schaefer M."/>
            <person name="Mueller-Auer S."/>
            <person name="Gabel C."/>
            <person name="Fuchs M."/>
            <person name="Benes V."/>
            <person name="Wurmbach E."/>
            <person name="Drzonek H."/>
            <person name="Erfle H."/>
            <person name="Jordan N."/>
            <person name="Bangert S."/>
            <person name="Wiedelmann R."/>
            <person name="Kranz H."/>
            <person name="Voss H."/>
            <person name="Holland R."/>
            <person name="Brandt P."/>
            <person name="Nyakatura G."/>
            <person name="Vezzi A."/>
            <person name="D'Angelo M."/>
            <person name="Pallavicini A."/>
            <person name="Toppo S."/>
            <person name="Simionati B."/>
            <person name="Conrad A."/>
            <person name="Hornischer K."/>
            <person name="Kauer G."/>
            <person name="Loehnert T.-H."/>
            <person name="Nordsiek G."/>
            <person name="Reichelt J."/>
            <person name="Scharfe M."/>
            <person name="Schoen O."/>
            <person name="Bargues M."/>
            <person name="Terol J."/>
            <person name="Climent J."/>
            <person name="Navarro P."/>
            <person name="Collado C."/>
            <person name="Perez-Perez A."/>
            <person name="Ottenwaelder B."/>
            <person name="Duchemin D."/>
            <person name="Cooke R."/>
            <person name="Laudie M."/>
            <person name="Berger-Llauro C."/>
            <person name="Purnelle B."/>
            <person name="Masuy D."/>
            <person name="de Haan M."/>
            <person name="Maarse A.C."/>
            <person name="Alcaraz J.-P."/>
            <person name="Cottet A."/>
            <person name="Casacuberta E."/>
            <person name="Monfort A."/>
            <person name="Argiriou A."/>
            <person name="Flores M."/>
            <person name="Liguori R."/>
            <person name="Vitale D."/>
            <person name="Mannhaupt G."/>
            <person name="Haase D."/>
            <person name="Schoof H."/>
            <person name="Rudd S."/>
            <person name="Zaccaria P."/>
            <person name="Mewes H.-W."/>
            <person name="Mayer K.F.X."/>
            <person name="Kaul S."/>
            <person name="Town C.D."/>
            <person name="Koo H.L."/>
            <person name="Tallon L.J."/>
            <person name="Jenkins J."/>
            <person name="Rooney T."/>
            <person name="Rizzo M."/>
            <person name="Walts A."/>
            <person name="Utterback T."/>
            <person name="Fujii C.Y."/>
            <person name="Shea T.P."/>
            <person name="Creasy T.H."/>
            <person name="Haas B."/>
            <person name="Maiti R."/>
            <person name="Wu D."/>
            <person name="Peterson J."/>
            <person name="Van Aken S."/>
            <person name="Pai G."/>
            <person name="Militscher J."/>
            <person name="Sellers P."/>
            <person name="Gill J.E."/>
            <person name="Feldblyum T.V."/>
            <person name="Preuss D."/>
            <person name="Lin X."/>
            <person name="Nierman W.C."/>
            <person name="Salzberg S.L."/>
            <person name="White O."/>
            <person name="Venter J.C."/>
            <person name="Fraser C.M."/>
            <person name="Kaneko T."/>
            <person name="Nakamura Y."/>
            <person name="Sato S."/>
            <person name="Kato T."/>
            <person name="Asamizu E."/>
            <person name="Sasamoto S."/>
            <person name="Kimura T."/>
            <person name="Idesawa K."/>
            <person name="Kawashima K."/>
            <person name="Kishida Y."/>
            <person name="Kiyokawa C."/>
            <person name="Kohara M."/>
            <person name="Matsumoto M."/>
            <person name="Matsuno A."/>
            <person name="Muraki A."/>
            <person name="Nakayama S."/>
            <person name="Nakazaki N."/>
            <person name="Shinpo S."/>
            <person name="Takeuchi C."/>
            <person name="Wada T."/>
            <person name="Watanabe A."/>
            <person name="Yamada M."/>
            <person name="Yasuda M."/>
            <person name="Tabata S."/>
        </authorList>
    </citation>
    <scope>NUCLEOTIDE SEQUENCE [LARGE SCALE GENOMIC DNA]</scope>
    <source>
        <strain>cv. Columbia</strain>
    </source>
</reference>
<reference key="3">
    <citation type="journal article" date="2017" name="Plant J.">
        <title>Araport11: a complete reannotation of the Arabidopsis thaliana reference genome.</title>
        <authorList>
            <person name="Cheng C.Y."/>
            <person name="Krishnakumar V."/>
            <person name="Chan A.P."/>
            <person name="Thibaud-Nissen F."/>
            <person name="Schobel S."/>
            <person name="Town C.D."/>
        </authorList>
    </citation>
    <scope>GENOME REANNOTATION</scope>
    <source>
        <strain>cv. Columbia</strain>
    </source>
</reference>
<reference key="4">
    <citation type="journal article" date="2002" name="Crit. Rev. Plant Sci.">
        <title>Lectin receptor kinases in plants.</title>
        <authorList>
            <person name="Barre A."/>
            <person name="Herve C."/>
            <person name="Lescure B."/>
            <person name="Rouge P."/>
        </authorList>
    </citation>
    <scope>GENE FAMILY</scope>
</reference>
<reference key="5">
    <citation type="journal article" date="2009" name="J. Exp. Bot.">
        <title>Arabidopsis L-type lectin receptor kinases: phylogeny, classification, and expression profiles.</title>
        <authorList>
            <person name="Bouwmeester K."/>
            <person name="Govers F."/>
        </authorList>
    </citation>
    <scope>GENE FAMILY</scope>
    <scope>NOMENCLATURE</scope>
</reference>
<reference key="6">
    <citation type="journal article" date="2014" name="Mol. Plant Microbe Interact.">
        <title>Phenotypic analyses of Arabidopsis T-DNA insertion lines and expression profiling reveal that multiple L-type lectin receptor kinases are involved in plant immunity.</title>
        <authorList>
            <person name="Wang Y."/>
            <person name="Bouwmeester K."/>
            <person name="Beseh P."/>
            <person name="Shan W."/>
            <person name="Govers F."/>
        </authorList>
    </citation>
    <scope>FUNCTION</scope>
    <scope>DISRUPTION PHENOTYPE</scope>
    <source>
        <strain>cv. Columbia</strain>
    </source>
</reference>
<comment type="function">
    <text evidence="4">Involved in resistance response to the pathogenic oomycetes Phytophthora infestans and Phytophthora capsici and to the pathogenic bacteria Pseudomonas syringae.</text>
</comment>
<comment type="catalytic activity">
    <reaction evidence="3">
        <text>L-seryl-[protein] + ATP = O-phospho-L-seryl-[protein] + ADP + H(+)</text>
        <dbReference type="Rhea" id="RHEA:17989"/>
        <dbReference type="Rhea" id="RHEA-COMP:9863"/>
        <dbReference type="Rhea" id="RHEA-COMP:11604"/>
        <dbReference type="ChEBI" id="CHEBI:15378"/>
        <dbReference type="ChEBI" id="CHEBI:29999"/>
        <dbReference type="ChEBI" id="CHEBI:30616"/>
        <dbReference type="ChEBI" id="CHEBI:83421"/>
        <dbReference type="ChEBI" id="CHEBI:456216"/>
        <dbReference type="EC" id="2.7.11.1"/>
    </reaction>
</comment>
<comment type="catalytic activity">
    <reaction evidence="3">
        <text>L-threonyl-[protein] + ATP = O-phospho-L-threonyl-[protein] + ADP + H(+)</text>
        <dbReference type="Rhea" id="RHEA:46608"/>
        <dbReference type="Rhea" id="RHEA-COMP:11060"/>
        <dbReference type="Rhea" id="RHEA-COMP:11605"/>
        <dbReference type="ChEBI" id="CHEBI:15378"/>
        <dbReference type="ChEBI" id="CHEBI:30013"/>
        <dbReference type="ChEBI" id="CHEBI:30616"/>
        <dbReference type="ChEBI" id="CHEBI:61977"/>
        <dbReference type="ChEBI" id="CHEBI:456216"/>
        <dbReference type="EC" id="2.7.11.1"/>
    </reaction>
</comment>
<comment type="subcellular location">
    <subcellularLocation>
        <location evidence="1">Cell membrane</location>
        <topology evidence="2">Single-pass type I membrane protein</topology>
    </subcellularLocation>
</comment>
<comment type="disruption phenotype">
    <text evidence="4">Increased susceptibility to the oomycetes Phytophthora brassicae and Phytophthora capsici and to the bacteria Pseudomonas syringae, characterized by stronger necrotic symptoms.</text>
</comment>
<comment type="similarity">
    <text evidence="7">In the C-terminal section; belongs to the protein kinase superfamily. Ser/Thr protein kinase family.</text>
</comment>
<comment type="similarity">
    <text evidence="7">In the N-terminal section; belongs to the leguminous lectin family.</text>
</comment>
<comment type="sequence caution" evidence="7">
    <conflict type="erroneous gene model prediction">
        <sequence resource="EMBL-CDS" id="CAB75471"/>
    </conflict>
</comment>
<comment type="sequence caution" evidence="7">
    <conflict type="erroneous gene model prediction">
        <sequence resource="EMBL-CDS" id="CAB75793"/>
    </conflict>
</comment>
<name>LRK57_ARATH</name>